<name>IHFA_NEIMF</name>
<proteinExistence type="inferred from homology"/>
<organism>
    <name type="scientific">Neisseria meningitidis serogroup C / serotype 2a (strain ATCC 700532 / DSM 15464 / FAM18)</name>
    <dbReference type="NCBI Taxonomy" id="272831"/>
    <lineage>
        <taxon>Bacteria</taxon>
        <taxon>Pseudomonadati</taxon>
        <taxon>Pseudomonadota</taxon>
        <taxon>Betaproteobacteria</taxon>
        <taxon>Neisseriales</taxon>
        <taxon>Neisseriaceae</taxon>
        <taxon>Neisseria</taxon>
    </lineage>
</organism>
<keyword id="KW-0233">DNA recombination</keyword>
<keyword id="KW-0238">DNA-binding</keyword>
<keyword id="KW-0804">Transcription</keyword>
<keyword id="KW-0805">Transcription regulation</keyword>
<keyword id="KW-0810">Translation regulation</keyword>
<protein>
    <recommendedName>
        <fullName evidence="1">Integration host factor subunit alpha</fullName>
        <shortName evidence="1">IHF-alpha</shortName>
    </recommendedName>
</protein>
<gene>
    <name evidence="1" type="primary">ihfA</name>
    <name evidence="1" type="synonym">himA</name>
    <name type="ordered locus">NMC0682</name>
</gene>
<feature type="chain" id="PRO_1000060549" description="Integration host factor subunit alpha">
    <location>
        <begin position="1"/>
        <end position="100"/>
    </location>
</feature>
<feature type="region of interest" description="Disordered" evidence="2">
    <location>
        <begin position="53"/>
        <end position="72"/>
    </location>
</feature>
<evidence type="ECO:0000255" key="1">
    <source>
        <dbReference type="HAMAP-Rule" id="MF_00380"/>
    </source>
</evidence>
<evidence type="ECO:0000256" key="2">
    <source>
        <dbReference type="SAM" id="MobiDB-lite"/>
    </source>
</evidence>
<comment type="function">
    <text evidence="1">This protein is one of the two subunits of integration host factor, a specific DNA-binding protein that functions in genetic recombination as well as in transcriptional and translational control.</text>
</comment>
<comment type="subunit">
    <text evidence="1">Heterodimer of an alpha and a beta chain.</text>
</comment>
<comment type="similarity">
    <text evidence="1">Belongs to the bacterial histone-like protein family.</text>
</comment>
<accession>A1KSZ1</accession>
<reference key="1">
    <citation type="journal article" date="2007" name="PLoS Genet.">
        <title>Meningococcal genetic variation mechanisms viewed through comparative analysis of serogroup C strain FAM18.</title>
        <authorList>
            <person name="Bentley S.D."/>
            <person name="Vernikos G.S."/>
            <person name="Snyder L.A.S."/>
            <person name="Churcher C."/>
            <person name="Arrowsmith C."/>
            <person name="Chillingworth T."/>
            <person name="Cronin A."/>
            <person name="Davis P.H."/>
            <person name="Holroyd N.E."/>
            <person name="Jagels K."/>
            <person name="Maddison M."/>
            <person name="Moule S."/>
            <person name="Rabbinowitsch E."/>
            <person name="Sharp S."/>
            <person name="Unwin L."/>
            <person name="Whitehead S."/>
            <person name="Quail M.A."/>
            <person name="Achtman M."/>
            <person name="Barrell B.G."/>
            <person name="Saunders N.J."/>
            <person name="Parkhill J."/>
        </authorList>
    </citation>
    <scope>NUCLEOTIDE SEQUENCE [LARGE SCALE GENOMIC DNA]</scope>
    <source>
        <strain>ATCC 700532 / DSM 15464 / FAM18</strain>
    </source>
</reference>
<sequence>MTLTKAELADILVDKVSNVTKNDAKEIVELFFEEIRSTLASGEEIKISGFGNFQLRDKPQRPGRNPKTGEEVPITARRVVTFHASQKLKSMVEHYYDKQR</sequence>
<dbReference type="EMBL" id="AM421808">
    <property type="protein sequence ID" value="CAM09972.1"/>
    <property type="molecule type" value="Genomic_DNA"/>
</dbReference>
<dbReference type="RefSeq" id="WP_002214080.1">
    <property type="nucleotide sequence ID" value="NC_008767.1"/>
</dbReference>
<dbReference type="SMR" id="A1KSZ1"/>
<dbReference type="KEGG" id="nmc:NMC0682"/>
<dbReference type="HOGENOM" id="CLU_105066_1_3_4"/>
<dbReference type="Proteomes" id="UP000002286">
    <property type="component" value="Chromosome"/>
</dbReference>
<dbReference type="GO" id="GO:0005829">
    <property type="term" value="C:cytosol"/>
    <property type="evidence" value="ECO:0007669"/>
    <property type="project" value="TreeGrafter"/>
</dbReference>
<dbReference type="GO" id="GO:0003677">
    <property type="term" value="F:DNA binding"/>
    <property type="evidence" value="ECO:0007669"/>
    <property type="project" value="UniProtKB-UniRule"/>
</dbReference>
<dbReference type="GO" id="GO:0030527">
    <property type="term" value="F:structural constituent of chromatin"/>
    <property type="evidence" value="ECO:0007669"/>
    <property type="project" value="InterPro"/>
</dbReference>
<dbReference type="GO" id="GO:0006310">
    <property type="term" value="P:DNA recombination"/>
    <property type="evidence" value="ECO:0007669"/>
    <property type="project" value="UniProtKB-UniRule"/>
</dbReference>
<dbReference type="GO" id="GO:0009893">
    <property type="term" value="P:positive regulation of metabolic process"/>
    <property type="evidence" value="ECO:0007669"/>
    <property type="project" value="UniProtKB-ARBA"/>
</dbReference>
<dbReference type="GO" id="GO:0006355">
    <property type="term" value="P:regulation of DNA-templated transcription"/>
    <property type="evidence" value="ECO:0007669"/>
    <property type="project" value="UniProtKB-UniRule"/>
</dbReference>
<dbReference type="GO" id="GO:0006417">
    <property type="term" value="P:regulation of translation"/>
    <property type="evidence" value="ECO:0007669"/>
    <property type="project" value="UniProtKB-UniRule"/>
</dbReference>
<dbReference type="CDD" id="cd13835">
    <property type="entry name" value="IHF_A"/>
    <property type="match status" value="1"/>
</dbReference>
<dbReference type="FunFam" id="4.10.520.10:FF:000002">
    <property type="entry name" value="Integration host factor subunit alpha"/>
    <property type="match status" value="1"/>
</dbReference>
<dbReference type="Gene3D" id="4.10.520.10">
    <property type="entry name" value="IHF-like DNA-binding proteins"/>
    <property type="match status" value="1"/>
</dbReference>
<dbReference type="HAMAP" id="MF_00380">
    <property type="entry name" value="IHF_alpha"/>
    <property type="match status" value="1"/>
</dbReference>
<dbReference type="InterPro" id="IPR000119">
    <property type="entry name" value="Hist_DNA-bd"/>
</dbReference>
<dbReference type="InterPro" id="IPR020816">
    <property type="entry name" value="Histone-like_DNA-bd_CS"/>
</dbReference>
<dbReference type="InterPro" id="IPR010992">
    <property type="entry name" value="IHF-like_DNA-bd_dom_sf"/>
</dbReference>
<dbReference type="InterPro" id="IPR005684">
    <property type="entry name" value="IHF_alpha"/>
</dbReference>
<dbReference type="NCBIfam" id="TIGR00987">
    <property type="entry name" value="himA"/>
    <property type="match status" value="1"/>
</dbReference>
<dbReference type="NCBIfam" id="NF001401">
    <property type="entry name" value="PRK00285.1"/>
    <property type="match status" value="1"/>
</dbReference>
<dbReference type="PANTHER" id="PTHR33175">
    <property type="entry name" value="DNA-BINDING PROTEIN HU"/>
    <property type="match status" value="1"/>
</dbReference>
<dbReference type="PANTHER" id="PTHR33175:SF2">
    <property type="entry name" value="INTEGRATION HOST FACTOR SUBUNIT ALPHA"/>
    <property type="match status" value="1"/>
</dbReference>
<dbReference type="Pfam" id="PF00216">
    <property type="entry name" value="Bac_DNA_binding"/>
    <property type="match status" value="1"/>
</dbReference>
<dbReference type="PRINTS" id="PR01727">
    <property type="entry name" value="DNABINDINGHU"/>
</dbReference>
<dbReference type="SMART" id="SM00411">
    <property type="entry name" value="BHL"/>
    <property type="match status" value="1"/>
</dbReference>
<dbReference type="SUPFAM" id="SSF47729">
    <property type="entry name" value="IHF-like DNA-binding proteins"/>
    <property type="match status" value="1"/>
</dbReference>
<dbReference type="PROSITE" id="PS00045">
    <property type="entry name" value="HISTONE_LIKE"/>
    <property type="match status" value="1"/>
</dbReference>